<organism>
    <name type="scientific">Shewanella sp. (strain MR-7)</name>
    <dbReference type="NCBI Taxonomy" id="60481"/>
    <lineage>
        <taxon>Bacteria</taxon>
        <taxon>Pseudomonadati</taxon>
        <taxon>Pseudomonadota</taxon>
        <taxon>Gammaproteobacteria</taxon>
        <taxon>Alteromonadales</taxon>
        <taxon>Shewanellaceae</taxon>
        <taxon>Shewanella</taxon>
    </lineage>
</organism>
<name>DEOD_SHESR</name>
<protein>
    <recommendedName>
        <fullName evidence="2">Purine nucleoside phosphorylase DeoD-type</fullName>
        <shortName evidence="2">PNP</shortName>
        <ecNumber evidence="2">2.4.2.1</ecNumber>
    </recommendedName>
</protein>
<keyword id="KW-0328">Glycosyltransferase</keyword>
<keyword id="KW-0808">Transferase</keyword>
<proteinExistence type="inferred from homology"/>
<sequence length="236" mass="25589">MATPHINAVEGAFAETVLFPGDPLRAKYIAETFLENVEQVTDVRNMLGFTGTYKGKRISVMGSGMGIPSCSIYATELIKDYGVKNLIRVGTCGAISTDVKVRDVIIGMGACTDSQVNRLRFKGQDFAAIANYELMNAVIESAKVKGTKIRVGNVFSADLFYTPDPQMFDVMEKMGVLGVEMEAAGLYGVAHEFGARALCVVTVSDHIRTGEKTTSDERQTTFNDMIVMTLDAAITL</sequence>
<comment type="function">
    <text evidence="2">Catalyzes the reversible phosphorolytic breakdown of the N-glycosidic bond in the beta-(deoxy)ribonucleoside molecules, with the formation of the corresponding free purine bases and pentose-1-phosphate.</text>
</comment>
<comment type="catalytic activity">
    <reaction evidence="2">
        <text>a purine D-ribonucleoside + phosphate = a purine nucleobase + alpha-D-ribose 1-phosphate</text>
        <dbReference type="Rhea" id="RHEA:19805"/>
        <dbReference type="ChEBI" id="CHEBI:26386"/>
        <dbReference type="ChEBI" id="CHEBI:43474"/>
        <dbReference type="ChEBI" id="CHEBI:57720"/>
        <dbReference type="ChEBI" id="CHEBI:142355"/>
        <dbReference type="EC" id="2.4.2.1"/>
    </reaction>
</comment>
<comment type="catalytic activity">
    <reaction evidence="2">
        <text>a purine 2'-deoxy-D-ribonucleoside + phosphate = a purine nucleobase + 2-deoxy-alpha-D-ribose 1-phosphate</text>
        <dbReference type="Rhea" id="RHEA:36431"/>
        <dbReference type="ChEBI" id="CHEBI:26386"/>
        <dbReference type="ChEBI" id="CHEBI:43474"/>
        <dbReference type="ChEBI" id="CHEBI:57259"/>
        <dbReference type="ChEBI" id="CHEBI:142361"/>
        <dbReference type="EC" id="2.4.2.1"/>
    </reaction>
</comment>
<comment type="subunit">
    <text evidence="2">Homohexamer; trimer of homodimers.</text>
</comment>
<comment type="similarity">
    <text evidence="2">Belongs to the PNP/UDP phosphorylase family.</text>
</comment>
<feature type="chain" id="PRO_1000069647" description="Purine nucleoside phosphorylase DeoD-type">
    <location>
        <begin position="1"/>
        <end position="236"/>
    </location>
</feature>
<feature type="active site" description="Proton donor" evidence="2">
    <location>
        <position position="205"/>
    </location>
</feature>
<feature type="binding site" evidence="1">
    <location>
        <position position="5"/>
    </location>
    <ligand>
        <name>a purine D-ribonucleoside</name>
        <dbReference type="ChEBI" id="CHEBI:142355"/>
        <note>ligand shared between dimeric partners</note>
    </ligand>
</feature>
<feature type="binding site" description="in other chain" evidence="1">
    <location>
        <position position="21"/>
    </location>
    <ligand>
        <name>phosphate</name>
        <dbReference type="ChEBI" id="CHEBI:43474"/>
        <note>ligand shared between dimeric partners</note>
    </ligand>
</feature>
<feature type="binding site" description="in other chain" evidence="1">
    <location>
        <position position="25"/>
    </location>
    <ligand>
        <name>phosphate</name>
        <dbReference type="ChEBI" id="CHEBI:43474"/>
        <note>ligand shared between dimeric partners</note>
    </ligand>
</feature>
<feature type="binding site" evidence="1">
    <location>
        <position position="44"/>
    </location>
    <ligand>
        <name>phosphate</name>
        <dbReference type="ChEBI" id="CHEBI:43474"/>
        <note>ligand shared between dimeric partners</note>
    </ligand>
</feature>
<feature type="binding site" description="in other chain" evidence="1">
    <location>
        <begin position="88"/>
        <end position="91"/>
    </location>
    <ligand>
        <name>phosphate</name>
        <dbReference type="ChEBI" id="CHEBI:43474"/>
        <note>ligand shared between dimeric partners</note>
    </ligand>
</feature>
<feature type="binding site" description="in other chain" evidence="1">
    <location>
        <begin position="180"/>
        <end position="182"/>
    </location>
    <ligand>
        <name>a purine D-ribonucleoside</name>
        <dbReference type="ChEBI" id="CHEBI:142355"/>
        <note>ligand shared between dimeric partners</note>
    </ligand>
</feature>
<feature type="binding site" description="in other chain" evidence="1">
    <location>
        <begin position="204"/>
        <end position="205"/>
    </location>
    <ligand>
        <name>a purine D-ribonucleoside</name>
        <dbReference type="ChEBI" id="CHEBI:142355"/>
        <note>ligand shared between dimeric partners</note>
    </ligand>
</feature>
<feature type="site" description="Important for catalytic activity" evidence="2">
    <location>
        <position position="218"/>
    </location>
</feature>
<reference key="1">
    <citation type="submission" date="2006-08" db="EMBL/GenBank/DDBJ databases">
        <title>Complete sequence of chromosome 1 of Shewanella sp. MR-7.</title>
        <authorList>
            <person name="Copeland A."/>
            <person name="Lucas S."/>
            <person name="Lapidus A."/>
            <person name="Barry K."/>
            <person name="Detter J.C."/>
            <person name="Glavina del Rio T."/>
            <person name="Hammon N."/>
            <person name="Israni S."/>
            <person name="Dalin E."/>
            <person name="Tice H."/>
            <person name="Pitluck S."/>
            <person name="Kiss H."/>
            <person name="Brettin T."/>
            <person name="Bruce D."/>
            <person name="Han C."/>
            <person name="Tapia R."/>
            <person name="Gilna P."/>
            <person name="Schmutz J."/>
            <person name="Larimer F."/>
            <person name="Land M."/>
            <person name="Hauser L."/>
            <person name="Kyrpides N."/>
            <person name="Mikhailova N."/>
            <person name="Nealson K."/>
            <person name="Konstantinidis K."/>
            <person name="Klappenbach J."/>
            <person name="Tiedje J."/>
            <person name="Richardson P."/>
        </authorList>
    </citation>
    <scope>NUCLEOTIDE SEQUENCE [LARGE SCALE GENOMIC DNA]</scope>
    <source>
        <strain>MR-7</strain>
    </source>
</reference>
<gene>
    <name evidence="2" type="primary">deoD</name>
    <name type="ordered locus">Shewmr7_1105</name>
</gene>
<accession>Q0HXQ1</accession>
<evidence type="ECO:0000250" key="1">
    <source>
        <dbReference type="UniProtKB" id="P50389"/>
    </source>
</evidence>
<evidence type="ECO:0000255" key="2">
    <source>
        <dbReference type="HAMAP-Rule" id="MF_01627"/>
    </source>
</evidence>
<dbReference type="EC" id="2.4.2.1" evidence="2"/>
<dbReference type="EMBL" id="CP000444">
    <property type="protein sequence ID" value="ABI42104.1"/>
    <property type="molecule type" value="Genomic_DNA"/>
</dbReference>
<dbReference type="SMR" id="Q0HXQ1"/>
<dbReference type="KEGG" id="shm:Shewmr7_1105"/>
<dbReference type="HOGENOM" id="CLU_068457_2_0_6"/>
<dbReference type="GO" id="GO:0005829">
    <property type="term" value="C:cytosol"/>
    <property type="evidence" value="ECO:0007669"/>
    <property type="project" value="TreeGrafter"/>
</dbReference>
<dbReference type="GO" id="GO:0004731">
    <property type="term" value="F:purine-nucleoside phosphorylase activity"/>
    <property type="evidence" value="ECO:0007669"/>
    <property type="project" value="UniProtKB-UniRule"/>
</dbReference>
<dbReference type="GO" id="GO:0006152">
    <property type="term" value="P:purine nucleoside catabolic process"/>
    <property type="evidence" value="ECO:0007669"/>
    <property type="project" value="TreeGrafter"/>
</dbReference>
<dbReference type="CDD" id="cd09006">
    <property type="entry name" value="PNP_EcPNPI-like"/>
    <property type="match status" value="1"/>
</dbReference>
<dbReference type="Gene3D" id="3.40.50.1580">
    <property type="entry name" value="Nucleoside phosphorylase domain"/>
    <property type="match status" value="1"/>
</dbReference>
<dbReference type="HAMAP" id="MF_01627">
    <property type="entry name" value="Pur_nucleosid_phosp"/>
    <property type="match status" value="1"/>
</dbReference>
<dbReference type="InterPro" id="IPR004402">
    <property type="entry name" value="DeoD-type"/>
</dbReference>
<dbReference type="InterPro" id="IPR018016">
    <property type="entry name" value="Nucleoside_phosphorylase_CS"/>
</dbReference>
<dbReference type="InterPro" id="IPR000845">
    <property type="entry name" value="Nucleoside_phosphorylase_d"/>
</dbReference>
<dbReference type="InterPro" id="IPR035994">
    <property type="entry name" value="Nucleoside_phosphorylase_sf"/>
</dbReference>
<dbReference type="NCBIfam" id="TIGR00107">
    <property type="entry name" value="deoD"/>
    <property type="match status" value="1"/>
</dbReference>
<dbReference type="NCBIfam" id="NF004489">
    <property type="entry name" value="PRK05819.1"/>
    <property type="match status" value="1"/>
</dbReference>
<dbReference type="NCBIfam" id="NF009914">
    <property type="entry name" value="PRK13374.1"/>
    <property type="match status" value="1"/>
</dbReference>
<dbReference type="PANTHER" id="PTHR43691:SF2">
    <property type="entry name" value="PURINE NUCLEOSIDE PHOSPHORYLASE DEOD-TYPE"/>
    <property type="match status" value="1"/>
</dbReference>
<dbReference type="PANTHER" id="PTHR43691">
    <property type="entry name" value="URIDINE PHOSPHORYLASE"/>
    <property type="match status" value="1"/>
</dbReference>
<dbReference type="Pfam" id="PF01048">
    <property type="entry name" value="PNP_UDP_1"/>
    <property type="match status" value="1"/>
</dbReference>
<dbReference type="SUPFAM" id="SSF53167">
    <property type="entry name" value="Purine and uridine phosphorylases"/>
    <property type="match status" value="1"/>
</dbReference>
<dbReference type="PROSITE" id="PS01232">
    <property type="entry name" value="PNP_UDP_1"/>
    <property type="match status" value="1"/>
</dbReference>